<organism>
    <name type="scientific">Haemophilus influenzae (strain 86-028NP)</name>
    <dbReference type="NCBI Taxonomy" id="281310"/>
    <lineage>
        <taxon>Bacteria</taxon>
        <taxon>Pseudomonadati</taxon>
        <taxon>Pseudomonadota</taxon>
        <taxon>Gammaproteobacteria</taxon>
        <taxon>Pasteurellales</taxon>
        <taxon>Pasteurellaceae</taxon>
        <taxon>Haemophilus</taxon>
    </lineage>
</organism>
<proteinExistence type="inferred from homology"/>
<dbReference type="EC" id="6.3.2.8" evidence="1"/>
<dbReference type="EMBL" id="CP000057">
    <property type="protein sequence ID" value="AAX88140.1"/>
    <property type="molecule type" value="Genomic_DNA"/>
</dbReference>
<dbReference type="RefSeq" id="WP_005690680.1">
    <property type="nucleotide sequence ID" value="NC_007146.2"/>
</dbReference>
<dbReference type="SMR" id="Q4QLF7"/>
<dbReference type="GeneID" id="93220145"/>
<dbReference type="KEGG" id="hit:NTHI1307"/>
<dbReference type="HOGENOM" id="CLU_028104_2_2_6"/>
<dbReference type="UniPathway" id="UPA00219"/>
<dbReference type="Proteomes" id="UP000002525">
    <property type="component" value="Chromosome"/>
</dbReference>
<dbReference type="GO" id="GO:0005737">
    <property type="term" value="C:cytoplasm"/>
    <property type="evidence" value="ECO:0007669"/>
    <property type="project" value="UniProtKB-SubCell"/>
</dbReference>
<dbReference type="GO" id="GO:0005524">
    <property type="term" value="F:ATP binding"/>
    <property type="evidence" value="ECO:0007669"/>
    <property type="project" value="UniProtKB-UniRule"/>
</dbReference>
<dbReference type="GO" id="GO:0008763">
    <property type="term" value="F:UDP-N-acetylmuramate-L-alanine ligase activity"/>
    <property type="evidence" value="ECO:0007669"/>
    <property type="project" value="UniProtKB-UniRule"/>
</dbReference>
<dbReference type="GO" id="GO:0051301">
    <property type="term" value="P:cell division"/>
    <property type="evidence" value="ECO:0007669"/>
    <property type="project" value="UniProtKB-KW"/>
</dbReference>
<dbReference type="GO" id="GO:0071555">
    <property type="term" value="P:cell wall organization"/>
    <property type="evidence" value="ECO:0007669"/>
    <property type="project" value="UniProtKB-KW"/>
</dbReference>
<dbReference type="GO" id="GO:0009252">
    <property type="term" value="P:peptidoglycan biosynthetic process"/>
    <property type="evidence" value="ECO:0007669"/>
    <property type="project" value="UniProtKB-UniRule"/>
</dbReference>
<dbReference type="GO" id="GO:0008360">
    <property type="term" value="P:regulation of cell shape"/>
    <property type="evidence" value="ECO:0007669"/>
    <property type="project" value="UniProtKB-KW"/>
</dbReference>
<dbReference type="FunFam" id="3.40.1190.10:FF:000001">
    <property type="entry name" value="UDP-N-acetylmuramate--L-alanine ligase"/>
    <property type="match status" value="1"/>
</dbReference>
<dbReference type="FunFam" id="3.40.50.720:FF:000046">
    <property type="entry name" value="UDP-N-acetylmuramate--L-alanine ligase"/>
    <property type="match status" value="1"/>
</dbReference>
<dbReference type="Gene3D" id="3.90.190.20">
    <property type="entry name" value="Mur ligase, C-terminal domain"/>
    <property type="match status" value="1"/>
</dbReference>
<dbReference type="Gene3D" id="3.40.1190.10">
    <property type="entry name" value="Mur-like, catalytic domain"/>
    <property type="match status" value="1"/>
</dbReference>
<dbReference type="Gene3D" id="3.40.50.720">
    <property type="entry name" value="NAD(P)-binding Rossmann-like Domain"/>
    <property type="match status" value="1"/>
</dbReference>
<dbReference type="HAMAP" id="MF_00046">
    <property type="entry name" value="MurC"/>
    <property type="match status" value="1"/>
</dbReference>
<dbReference type="InterPro" id="IPR036565">
    <property type="entry name" value="Mur-like_cat_sf"/>
</dbReference>
<dbReference type="InterPro" id="IPR004101">
    <property type="entry name" value="Mur_ligase_C"/>
</dbReference>
<dbReference type="InterPro" id="IPR036615">
    <property type="entry name" value="Mur_ligase_C_dom_sf"/>
</dbReference>
<dbReference type="InterPro" id="IPR013221">
    <property type="entry name" value="Mur_ligase_cen"/>
</dbReference>
<dbReference type="InterPro" id="IPR000713">
    <property type="entry name" value="Mur_ligase_N"/>
</dbReference>
<dbReference type="InterPro" id="IPR050061">
    <property type="entry name" value="MurCDEF_pg_biosynth"/>
</dbReference>
<dbReference type="InterPro" id="IPR005758">
    <property type="entry name" value="UDP-N-AcMur_Ala_ligase_MurC"/>
</dbReference>
<dbReference type="NCBIfam" id="TIGR01082">
    <property type="entry name" value="murC"/>
    <property type="match status" value="1"/>
</dbReference>
<dbReference type="PANTHER" id="PTHR43445:SF3">
    <property type="entry name" value="UDP-N-ACETYLMURAMATE--L-ALANINE LIGASE"/>
    <property type="match status" value="1"/>
</dbReference>
<dbReference type="PANTHER" id="PTHR43445">
    <property type="entry name" value="UDP-N-ACETYLMURAMATE--L-ALANINE LIGASE-RELATED"/>
    <property type="match status" value="1"/>
</dbReference>
<dbReference type="Pfam" id="PF01225">
    <property type="entry name" value="Mur_ligase"/>
    <property type="match status" value="1"/>
</dbReference>
<dbReference type="Pfam" id="PF02875">
    <property type="entry name" value="Mur_ligase_C"/>
    <property type="match status" value="1"/>
</dbReference>
<dbReference type="Pfam" id="PF08245">
    <property type="entry name" value="Mur_ligase_M"/>
    <property type="match status" value="1"/>
</dbReference>
<dbReference type="SUPFAM" id="SSF51984">
    <property type="entry name" value="MurCD N-terminal domain"/>
    <property type="match status" value="1"/>
</dbReference>
<dbReference type="SUPFAM" id="SSF53623">
    <property type="entry name" value="MurD-like peptide ligases, catalytic domain"/>
    <property type="match status" value="1"/>
</dbReference>
<dbReference type="SUPFAM" id="SSF53244">
    <property type="entry name" value="MurD-like peptide ligases, peptide-binding domain"/>
    <property type="match status" value="1"/>
</dbReference>
<protein>
    <recommendedName>
        <fullName evidence="1">UDP-N-acetylmuramate--L-alanine ligase</fullName>
        <ecNumber evidence="1">6.3.2.8</ecNumber>
    </recommendedName>
    <alternativeName>
        <fullName evidence="1">UDP-N-acetylmuramoyl-L-alanine synthetase</fullName>
    </alternativeName>
</protein>
<accession>Q4QLF7</accession>
<feature type="chain" id="PRO_0000182101" description="UDP-N-acetylmuramate--L-alanine ligase">
    <location>
        <begin position="1"/>
        <end position="475"/>
    </location>
</feature>
<feature type="binding site" evidence="1">
    <location>
        <begin position="125"/>
        <end position="131"/>
    </location>
    <ligand>
        <name>ATP</name>
        <dbReference type="ChEBI" id="CHEBI:30616"/>
    </ligand>
</feature>
<reference key="1">
    <citation type="journal article" date="2005" name="J. Bacteriol.">
        <title>Genomic sequence of an otitis media isolate of nontypeable Haemophilus influenzae: comparative study with H. influenzae serotype d, strain KW20.</title>
        <authorList>
            <person name="Harrison A."/>
            <person name="Dyer D.W."/>
            <person name="Gillaspy A."/>
            <person name="Ray W.C."/>
            <person name="Mungur R."/>
            <person name="Carson M.B."/>
            <person name="Zhong H."/>
            <person name="Gipson J."/>
            <person name="Gipson M."/>
            <person name="Johnson L.S."/>
            <person name="Lewis L."/>
            <person name="Bakaletz L.O."/>
            <person name="Munson R.S. Jr."/>
        </authorList>
    </citation>
    <scope>NUCLEOTIDE SEQUENCE [LARGE SCALE GENOMIC DNA]</scope>
    <source>
        <strain>86-028NP</strain>
    </source>
</reference>
<keyword id="KW-0067">ATP-binding</keyword>
<keyword id="KW-0131">Cell cycle</keyword>
<keyword id="KW-0132">Cell division</keyword>
<keyword id="KW-0133">Cell shape</keyword>
<keyword id="KW-0961">Cell wall biogenesis/degradation</keyword>
<keyword id="KW-0963">Cytoplasm</keyword>
<keyword id="KW-0436">Ligase</keyword>
<keyword id="KW-0547">Nucleotide-binding</keyword>
<keyword id="KW-0573">Peptidoglycan synthesis</keyword>
<comment type="function">
    <text evidence="1">Cell wall formation.</text>
</comment>
<comment type="catalytic activity">
    <reaction evidence="1">
        <text>UDP-N-acetyl-alpha-D-muramate + L-alanine + ATP = UDP-N-acetyl-alpha-D-muramoyl-L-alanine + ADP + phosphate + H(+)</text>
        <dbReference type="Rhea" id="RHEA:23372"/>
        <dbReference type="ChEBI" id="CHEBI:15378"/>
        <dbReference type="ChEBI" id="CHEBI:30616"/>
        <dbReference type="ChEBI" id="CHEBI:43474"/>
        <dbReference type="ChEBI" id="CHEBI:57972"/>
        <dbReference type="ChEBI" id="CHEBI:70757"/>
        <dbReference type="ChEBI" id="CHEBI:83898"/>
        <dbReference type="ChEBI" id="CHEBI:456216"/>
        <dbReference type="EC" id="6.3.2.8"/>
    </reaction>
</comment>
<comment type="pathway">
    <text evidence="1">Cell wall biogenesis; peptidoglycan biosynthesis.</text>
</comment>
<comment type="subcellular location">
    <subcellularLocation>
        <location evidence="1">Cytoplasm</location>
    </subcellularLocation>
</comment>
<comment type="similarity">
    <text evidence="1">Belongs to the MurCDEF family.</text>
</comment>
<gene>
    <name evidence="1" type="primary">murC</name>
    <name type="ordered locus">NTHI1307</name>
</gene>
<name>MURC_HAEI8</name>
<sequence length="475" mass="52006">MKHSHEEIRKIIPEMRRVQQIHFIGIGGAGMSGIAEILLNEGYQISGSDIADGVVTQRLAQAGAKIYIGHAEEHIKGASVVVVSSAIKDDNPELVASKQKRIPVIQRAQMLAEIMRFRHGIAVAGTHGKTTTTAMISMIYTQAKLDPTFVNGGLVKSAGKNAHLGASRYLIAEADESDASFLHLQPMVSVVTNMEPDHMDTYEGDFEKMKATYVKFLHNLPFYGLAVMCADDPVLMELVPKVGRQVITYGFSEQADYRIEDYEQTGFQGHYTVICPNNERINVLLNVPGKHNALNATAALAVAKEEGIANEAILEALADFQGAGRRFDQLGEFIRPNGKVRLVDDYGHHPTEVDVTIKAAREGWGDKRIVMIFQPHRYSRTRDLFDDFVQVLSLVDALIMLDVYAAGEAPIVGADSKSLCRSIRNLGKVDPILVSDTSQLGDVLDQIIQDGDLILAQGAGSVSKISRGLAESWKN</sequence>
<evidence type="ECO:0000255" key="1">
    <source>
        <dbReference type="HAMAP-Rule" id="MF_00046"/>
    </source>
</evidence>